<keyword id="KW-0227">DNA damage</keyword>
<keyword id="KW-0234">DNA repair</keyword>
<keyword id="KW-0235">DNA replication</keyword>
<keyword id="KW-0238">DNA-binding</keyword>
<keyword id="KW-0239">DNA-directed DNA polymerase</keyword>
<keyword id="KW-0269">Exonuclease</keyword>
<keyword id="KW-0378">Hydrolase</keyword>
<keyword id="KW-0540">Nuclease</keyword>
<keyword id="KW-0548">Nucleotidyltransferase</keyword>
<keyword id="KW-1185">Reference proteome</keyword>
<keyword id="KW-0808">Transferase</keyword>
<proteinExistence type="inferred from homology"/>
<name>DPO1_DEIRA</name>
<sequence>MVFCGDGGLSCESIDFALCCLRGRSGNYVQSRILPMADASPDPSKPDTLVLIDGHALAFRSYFALPPLNNSKGEMTHAIVGFMKLLLRLARQKSNQVIVVFDPPVKTFRHEQYEGYKSGRAQTPEDLPGQINRIRALVDALGFPRLEEPGYEADDVIASLTRMAEGKGYEVRIVTSDRDAYQLLDEHVKVIANDFSLIGPAQVEEKYGVTVRQWVDYRALTGDASDNIPGAKGIGPKTAAKLLQEYGTLEKVYEAAHAGTLKPDGTRKKLLDSEENVKFSHDLSCMVTDLPLDIEFGVRRLPDNPLVTEDLLTELELHSLRPMILGLNGPEQDGHAPDDLLEREHAQTPEEDEAAALPAFSAPELAEWQTPAEGAVWGYVLSREDDLTAALLAAATFEDGVARPAPVSEPDEWAQAEAPENLFGELLPSDKPLTKKEQKALEKAQKDAEKARAKLREQFPATVDEAEFVGQRTVTAAAAKALAAHLSVRGTVVEPGDDPLLYAYLLDPANTNMPVVAKRYLDREWPADAPTRAAITGHLLRELPPLLDDARRKMYDEMEKPLSGVLGRMEVRGVQVDSDFLQTLSIQAGVRLADLESQIHEYAGEEFHIRSPKQLETVLYDKLELASSKKTKLTGQRSTAVSALEPLRDAHPIIPLVLEFRELDKLRGTYLDPIPNLVNPHTGRLHTTFAQTAVATGRLSSLNPNLQNIPIRSELGREIRKGFIAEDGFTLIAADYSQIELRLLAHIADDPLMQQAFVEGADIHRRTAAQVLGLDEATVDANQRRAAKTVNFGVLYGMSAHRLSNDLGIPYAEAATFIEIYFATYPGIRRYINHTLDFGRTHGYVETLYGRRRYVPGLSSRNRVQREAEERLAYNMPIQGTAADIMKLAMVQLDPQLDAIGARMLLQVHDELLIEAPLDKAEQVAALTKKVMENVVQLKVPLAVEVGTGPNWFDTK</sequence>
<protein>
    <recommendedName>
        <fullName>DNA polymerase I</fullName>
        <shortName>POL I</shortName>
        <ecNumber>2.7.7.7</ecNumber>
    </recommendedName>
</protein>
<reference key="1">
    <citation type="journal article" date="1993" name="J. Bacteriol.">
        <title>Identification, sequencing, and targeted mutagenesis of a DNA polymerase gene required for the extreme radioresistance of Deinococcus radiodurans.</title>
        <authorList>
            <person name="Gutman P.D."/>
            <person name="Fuchs P."/>
            <person name="Ouyang L."/>
            <person name="Minton K.W."/>
        </authorList>
    </citation>
    <scope>NUCLEOTIDE SEQUENCE [GENOMIC DNA] OF 36-956</scope>
    <source>
        <strain>ATCC 13939 / DSM 20539 / JCM 16871 / CCUG 27074 / LMG 4051 / NBRC 15346 / NCIMB 9279 / VKM B-1422 / R1</strain>
    </source>
</reference>
<reference key="2">
    <citation type="journal article" date="1999" name="Science">
        <title>Genome sequence of the radioresistant bacterium Deinococcus radiodurans R1.</title>
        <authorList>
            <person name="White O."/>
            <person name="Eisen J.A."/>
            <person name="Heidelberg J.F."/>
            <person name="Hickey E.K."/>
            <person name="Peterson J.D."/>
            <person name="Dodson R.J."/>
            <person name="Haft D.H."/>
            <person name="Gwinn M.L."/>
            <person name="Nelson W.C."/>
            <person name="Richardson D.L."/>
            <person name="Moffat K.S."/>
            <person name="Qin H."/>
            <person name="Jiang L."/>
            <person name="Pamphile W."/>
            <person name="Crosby M."/>
            <person name="Shen M."/>
            <person name="Vamathevan J.J."/>
            <person name="Lam P."/>
            <person name="McDonald L.A."/>
            <person name="Utterback T.R."/>
            <person name="Zalewski C."/>
            <person name="Makarova K.S."/>
            <person name="Aravind L."/>
            <person name="Daly M.J."/>
            <person name="Minton K.W."/>
            <person name="Fleischmann R.D."/>
            <person name="Ketchum K.A."/>
            <person name="Nelson K.E."/>
            <person name="Salzberg S.L."/>
            <person name="Smith H.O."/>
            <person name="Venter J.C."/>
            <person name="Fraser C.M."/>
        </authorList>
    </citation>
    <scope>NUCLEOTIDE SEQUENCE [LARGE SCALE GENOMIC DNA]</scope>
    <source>
        <strain>ATCC 13939 / DSM 20539 / JCM 16871 / CCUG 27074 / LMG 4051 / NBRC 15346 / NCIMB 9279 / VKM B-1422 / R1</strain>
    </source>
</reference>
<reference key="3">
    <citation type="journal article" date="2009" name="Cell">
        <title>Recombination and replication in DNA repair of heavily irradiated Deinococcus radiodurans.</title>
        <authorList>
            <person name="Slade D."/>
            <person name="Lindner A.B."/>
            <person name="Paul G."/>
            <person name="Radman M."/>
        </authorList>
    </citation>
    <scope>FUNCTION</scope>
    <scope>DISRUPTION PHENOTYPE</scope>
    <source>
        <strain>ATCC 13939 / DSM 20539 / JCM 16871 / CCUG 27074 / LMG 4051 / NBRC 15346 / NCIMB 9279 / VKM B-1422 / R1</strain>
    </source>
</reference>
<organism>
    <name type="scientific">Deinococcus radiodurans (strain ATCC 13939 / DSM 20539 / JCM 16871 / CCUG 27074 / LMG 4051 / NBRC 15346 / NCIMB 9279 / VKM B-1422 / R1)</name>
    <dbReference type="NCBI Taxonomy" id="243230"/>
    <lineage>
        <taxon>Bacteria</taxon>
        <taxon>Thermotogati</taxon>
        <taxon>Deinococcota</taxon>
        <taxon>Deinococci</taxon>
        <taxon>Deinococcales</taxon>
        <taxon>Deinococcaceae</taxon>
        <taxon>Deinococcus</taxon>
    </lineage>
</organism>
<feature type="chain" id="PRO_0000101238" description="DNA polymerase I">
    <location>
        <begin position="1"/>
        <end position="956"/>
    </location>
</feature>
<feature type="domain" description="5'-3' exonuclease" evidence="2">
    <location>
        <begin position="209"/>
        <end position="296"/>
    </location>
</feature>
<feature type="sequence conflict" description="In Ref. 1; AAC36974." evidence="4" ref="1">
    <original>T</original>
    <variation>A</variation>
    <location>
        <position position="48"/>
    </location>
</feature>
<feature type="sequence conflict" description="In Ref. 1; AAC36974." evidence="4" ref="1">
    <original>H</original>
    <variation>D</variation>
    <location>
        <position position="77"/>
    </location>
</feature>
<feature type="sequence conflict" description="In Ref. 1; AAC36974." evidence="4" ref="1">
    <original>F</original>
    <variation>L</variation>
    <location>
        <position position="108"/>
    </location>
</feature>
<feature type="sequence conflict" description="In Ref. 1; AAC36974." evidence="4" ref="1">
    <original>P</original>
    <variation>R</variation>
    <location>
        <position position="128"/>
    </location>
</feature>
<feature type="sequence conflict" description="In Ref. 1; AAC36974." evidence="4" ref="1">
    <original>P</original>
    <variation>R</variation>
    <location>
        <position position="406"/>
    </location>
</feature>
<feature type="sequence conflict" description="In Ref. 1; AAC36974." evidence="4" ref="1">
    <original>L</original>
    <variation>V</variation>
    <location>
        <position position="540"/>
    </location>
</feature>
<gene>
    <name type="primary">polA</name>
    <name type="ordered locus">DR_1707</name>
</gene>
<evidence type="ECO:0000250" key="1">
    <source>
        <dbReference type="UniProtKB" id="P00582"/>
    </source>
</evidence>
<evidence type="ECO:0000255" key="2"/>
<evidence type="ECO:0000269" key="3">
    <source>
    </source>
</evidence>
<evidence type="ECO:0000305" key="4"/>
<accession>P52027</accession>
<comment type="function">
    <text evidence="1 3">A DNA polymerase, required for DNA repair after DNA damage induced by ionizing radiation (IR); this is not the major DNA polymerase (PubMed:19303848). Following severe irradiation (7 kGy of gamma irradiation) genomic DNA is fragmented. DNA is progressively degraded for the first 1.5 hours after IR, in a step promoted by RecA and counterbalanced by DNA Pol I and Pol III, followed by massive DNA synthesis and genome reassembly in the next hour. Optimal priming of DNA synthesis requires both RecA and RadA, Pol III initiates DNA synthesis while both Pol I and Pol III are required for its continuation (PubMed:19303848). May also have 5'-3' exonuclease activity (By similarity).</text>
</comment>
<comment type="catalytic activity">
    <reaction>
        <text>DNA(n) + a 2'-deoxyribonucleoside 5'-triphosphate = DNA(n+1) + diphosphate</text>
        <dbReference type="Rhea" id="RHEA:22508"/>
        <dbReference type="Rhea" id="RHEA-COMP:17339"/>
        <dbReference type="Rhea" id="RHEA-COMP:17340"/>
        <dbReference type="ChEBI" id="CHEBI:33019"/>
        <dbReference type="ChEBI" id="CHEBI:61560"/>
        <dbReference type="ChEBI" id="CHEBI:173112"/>
        <dbReference type="EC" id="2.7.7.7"/>
    </reaction>
</comment>
<comment type="subunit">
    <text>Single-chain monomer with multiple functions.</text>
</comment>
<comment type="disruption phenotype">
    <text evidence="3">Increased sensitivity to ionizing radiation (IR), lag time before DNA synthesis/repair commences increases considerably, decreased rates of both DNA synthesis and DNA repair following IR. If combined with a temperature-senstitive mutation in dnaE (catalytic subunit of Pol III) viability at 37 degrees is dramatically reduced (PubMed:19303848).</text>
</comment>
<comment type="similarity">
    <text evidence="4">Belongs to the DNA polymerase type-A family.</text>
</comment>
<dbReference type="EC" id="2.7.7.7"/>
<dbReference type="EMBL" id="L14581">
    <property type="protein sequence ID" value="AAC36974.1"/>
    <property type="molecule type" value="Unassigned_DNA"/>
</dbReference>
<dbReference type="EMBL" id="AE000513">
    <property type="protein sequence ID" value="AAF11264.1"/>
    <property type="molecule type" value="Genomic_DNA"/>
</dbReference>
<dbReference type="PIR" id="A40597">
    <property type="entry name" value="A40597"/>
</dbReference>
<dbReference type="RefSeq" id="NP_295430.1">
    <property type="nucleotide sequence ID" value="NC_001263.1"/>
</dbReference>
<dbReference type="SMR" id="P52027"/>
<dbReference type="FunCoup" id="P52027">
    <property type="interactions" value="260"/>
</dbReference>
<dbReference type="STRING" id="243230.DR_1707"/>
<dbReference type="PaxDb" id="243230-DR_1707"/>
<dbReference type="EnsemblBacteria" id="AAF11264">
    <property type="protein sequence ID" value="AAF11264"/>
    <property type="gene ID" value="DR_1707"/>
</dbReference>
<dbReference type="KEGG" id="dra:DR_1707"/>
<dbReference type="PATRIC" id="fig|243230.17.peg.1918"/>
<dbReference type="eggNOG" id="COG0258">
    <property type="taxonomic scope" value="Bacteria"/>
</dbReference>
<dbReference type="eggNOG" id="COG0749">
    <property type="taxonomic scope" value="Bacteria"/>
</dbReference>
<dbReference type="HOGENOM" id="CLU_004675_0_0_0"/>
<dbReference type="InParanoid" id="P52027"/>
<dbReference type="OrthoDB" id="9806424at2"/>
<dbReference type="Proteomes" id="UP000002524">
    <property type="component" value="Chromosome 1"/>
</dbReference>
<dbReference type="GO" id="GO:0008409">
    <property type="term" value="F:5'-3' exonuclease activity"/>
    <property type="evidence" value="ECO:0007669"/>
    <property type="project" value="InterPro"/>
</dbReference>
<dbReference type="GO" id="GO:0003677">
    <property type="term" value="F:DNA binding"/>
    <property type="evidence" value="ECO:0007669"/>
    <property type="project" value="UniProtKB-KW"/>
</dbReference>
<dbReference type="GO" id="GO:0003887">
    <property type="term" value="F:DNA-directed DNA polymerase activity"/>
    <property type="evidence" value="ECO:0000318"/>
    <property type="project" value="GO_Central"/>
</dbReference>
<dbReference type="GO" id="GO:0001882">
    <property type="term" value="F:nucleoside binding"/>
    <property type="evidence" value="ECO:0007669"/>
    <property type="project" value="InterPro"/>
</dbReference>
<dbReference type="GO" id="GO:0006261">
    <property type="term" value="P:DNA-templated DNA replication"/>
    <property type="evidence" value="ECO:0007669"/>
    <property type="project" value="InterPro"/>
</dbReference>
<dbReference type="GO" id="GO:0006302">
    <property type="term" value="P:double-strand break repair"/>
    <property type="evidence" value="ECO:0000318"/>
    <property type="project" value="GO_Central"/>
</dbReference>
<dbReference type="CDD" id="cd08637">
    <property type="entry name" value="DNA_pol_A_pol_I_C"/>
    <property type="match status" value="1"/>
</dbReference>
<dbReference type="CDD" id="cd09898">
    <property type="entry name" value="H3TH_53EXO"/>
    <property type="match status" value="1"/>
</dbReference>
<dbReference type="CDD" id="cd09859">
    <property type="entry name" value="PIN_53EXO"/>
    <property type="match status" value="1"/>
</dbReference>
<dbReference type="FunFam" id="1.10.150.20:FF:000002">
    <property type="entry name" value="DNA polymerase I"/>
    <property type="match status" value="1"/>
</dbReference>
<dbReference type="FunFam" id="1.10.150.20:FF:000003">
    <property type="entry name" value="DNA polymerase I"/>
    <property type="match status" value="1"/>
</dbReference>
<dbReference type="FunFam" id="1.20.1060.10:FF:000001">
    <property type="entry name" value="DNA polymerase I"/>
    <property type="match status" value="1"/>
</dbReference>
<dbReference type="FunFam" id="3.40.50.1010:FF:000001">
    <property type="entry name" value="DNA polymerase I"/>
    <property type="match status" value="1"/>
</dbReference>
<dbReference type="Gene3D" id="3.30.70.370">
    <property type="match status" value="1"/>
</dbReference>
<dbReference type="Gene3D" id="1.10.150.20">
    <property type="entry name" value="5' to 3' exonuclease, C-terminal subdomain"/>
    <property type="match status" value="2"/>
</dbReference>
<dbReference type="Gene3D" id="3.40.50.1010">
    <property type="entry name" value="5'-nuclease"/>
    <property type="match status" value="1"/>
</dbReference>
<dbReference type="Gene3D" id="3.30.420.10">
    <property type="entry name" value="Ribonuclease H-like superfamily/Ribonuclease H"/>
    <property type="match status" value="1"/>
</dbReference>
<dbReference type="Gene3D" id="1.20.1060.10">
    <property type="entry name" value="Taq DNA Polymerase, Chain T, domain 4"/>
    <property type="match status" value="1"/>
</dbReference>
<dbReference type="InterPro" id="IPR020046">
    <property type="entry name" value="5-3_exonucl_a-hlix_arch_N"/>
</dbReference>
<dbReference type="InterPro" id="IPR002421">
    <property type="entry name" value="5-3_exonuclease"/>
</dbReference>
<dbReference type="InterPro" id="IPR036279">
    <property type="entry name" value="5-3_exonuclease_C_sf"/>
</dbReference>
<dbReference type="InterPro" id="IPR019760">
    <property type="entry name" value="DNA-dir_DNA_pol_A_CS"/>
</dbReference>
<dbReference type="InterPro" id="IPR001098">
    <property type="entry name" value="DNA-dir_DNA_pol_A_palm_dom"/>
</dbReference>
<dbReference type="InterPro" id="IPR043502">
    <property type="entry name" value="DNA/RNA_pol_sf"/>
</dbReference>
<dbReference type="InterPro" id="IPR020045">
    <property type="entry name" value="DNA_polI_H3TH"/>
</dbReference>
<dbReference type="InterPro" id="IPR018320">
    <property type="entry name" value="DNA_polymerase_1"/>
</dbReference>
<dbReference type="InterPro" id="IPR002298">
    <property type="entry name" value="DNA_polymerase_A"/>
</dbReference>
<dbReference type="InterPro" id="IPR008918">
    <property type="entry name" value="HhH2"/>
</dbReference>
<dbReference type="InterPro" id="IPR029060">
    <property type="entry name" value="PIN-like_dom_sf"/>
</dbReference>
<dbReference type="InterPro" id="IPR012337">
    <property type="entry name" value="RNaseH-like_sf"/>
</dbReference>
<dbReference type="InterPro" id="IPR036397">
    <property type="entry name" value="RNaseH_sf"/>
</dbReference>
<dbReference type="InterPro" id="IPR015361">
    <property type="entry name" value="Taq_pol_thermo_exonuc"/>
</dbReference>
<dbReference type="NCBIfam" id="TIGR00593">
    <property type="entry name" value="pola"/>
    <property type="match status" value="1"/>
</dbReference>
<dbReference type="NCBIfam" id="NF004397">
    <property type="entry name" value="PRK05755.1"/>
    <property type="match status" value="1"/>
</dbReference>
<dbReference type="PANTHER" id="PTHR10133">
    <property type="entry name" value="DNA POLYMERASE I"/>
    <property type="match status" value="1"/>
</dbReference>
<dbReference type="PANTHER" id="PTHR10133:SF27">
    <property type="entry name" value="DNA POLYMERASE NU"/>
    <property type="match status" value="1"/>
</dbReference>
<dbReference type="Pfam" id="PF01367">
    <property type="entry name" value="5_3_exonuc"/>
    <property type="match status" value="1"/>
</dbReference>
<dbReference type="Pfam" id="PF02739">
    <property type="entry name" value="5_3_exonuc_N"/>
    <property type="match status" value="1"/>
</dbReference>
<dbReference type="Pfam" id="PF00476">
    <property type="entry name" value="DNA_pol_A"/>
    <property type="match status" value="1"/>
</dbReference>
<dbReference type="Pfam" id="PF09281">
    <property type="entry name" value="Taq-exonuc"/>
    <property type="match status" value="2"/>
</dbReference>
<dbReference type="PRINTS" id="PR00868">
    <property type="entry name" value="DNAPOLI"/>
</dbReference>
<dbReference type="SMART" id="SM00475">
    <property type="entry name" value="53EXOc"/>
    <property type="match status" value="1"/>
</dbReference>
<dbReference type="SMART" id="SM00279">
    <property type="entry name" value="HhH2"/>
    <property type="match status" value="1"/>
</dbReference>
<dbReference type="SMART" id="SM00482">
    <property type="entry name" value="POLAc"/>
    <property type="match status" value="1"/>
</dbReference>
<dbReference type="SUPFAM" id="SSF47807">
    <property type="entry name" value="5' to 3' exonuclease, C-terminal subdomain"/>
    <property type="match status" value="1"/>
</dbReference>
<dbReference type="SUPFAM" id="SSF56672">
    <property type="entry name" value="DNA/RNA polymerases"/>
    <property type="match status" value="1"/>
</dbReference>
<dbReference type="SUPFAM" id="SSF88723">
    <property type="entry name" value="PIN domain-like"/>
    <property type="match status" value="1"/>
</dbReference>
<dbReference type="SUPFAM" id="SSF53098">
    <property type="entry name" value="Ribonuclease H-like"/>
    <property type="match status" value="1"/>
</dbReference>
<dbReference type="PROSITE" id="PS00447">
    <property type="entry name" value="DNA_POLYMERASE_A"/>
    <property type="match status" value="1"/>
</dbReference>